<keyword id="KW-0963">Cytoplasm</keyword>
<keyword id="KW-0324">Glycolysis</keyword>
<keyword id="KW-0456">Lyase</keyword>
<keyword id="KW-0460">Magnesium</keyword>
<keyword id="KW-0479">Metal-binding</keyword>
<keyword id="KW-1185">Reference proteome</keyword>
<keyword id="KW-0964">Secreted</keyword>
<feature type="chain" id="PRO_0000133933" description="Enolase">
    <location>
        <begin position="1"/>
        <end position="428"/>
    </location>
</feature>
<feature type="active site" description="Proton donor" evidence="1">
    <location>
        <position position="205"/>
    </location>
</feature>
<feature type="active site" description="Proton acceptor" evidence="1">
    <location>
        <position position="337"/>
    </location>
</feature>
<feature type="binding site" evidence="1">
    <location>
        <position position="163"/>
    </location>
    <ligand>
        <name>(2R)-2-phosphoglycerate</name>
        <dbReference type="ChEBI" id="CHEBI:58289"/>
    </ligand>
</feature>
<feature type="binding site" evidence="1">
    <location>
        <position position="242"/>
    </location>
    <ligand>
        <name>Mg(2+)</name>
        <dbReference type="ChEBI" id="CHEBI:18420"/>
    </ligand>
</feature>
<feature type="binding site" evidence="1">
    <location>
        <position position="285"/>
    </location>
    <ligand>
        <name>Mg(2+)</name>
        <dbReference type="ChEBI" id="CHEBI:18420"/>
    </ligand>
</feature>
<feature type="binding site" evidence="1">
    <location>
        <position position="312"/>
    </location>
    <ligand>
        <name>Mg(2+)</name>
        <dbReference type="ChEBI" id="CHEBI:18420"/>
    </ligand>
</feature>
<feature type="binding site" evidence="1">
    <location>
        <position position="337"/>
    </location>
    <ligand>
        <name>(2R)-2-phosphoglycerate</name>
        <dbReference type="ChEBI" id="CHEBI:58289"/>
    </ligand>
</feature>
<feature type="binding site" evidence="1">
    <location>
        <position position="366"/>
    </location>
    <ligand>
        <name>(2R)-2-phosphoglycerate</name>
        <dbReference type="ChEBI" id="CHEBI:58289"/>
    </ligand>
</feature>
<feature type="binding site" evidence="1">
    <location>
        <position position="367"/>
    </location>
    <ligand>
        <name>(2R)-2-phosphoglycerate</name>
        <dbReference type="ChEBI" id="CHEBI:58289"/>
    </ligand>
</feature>
<feature type="binding site" evidence="1">
    <location>
        <position position="388"/>
    </location>
    <ligand>
        <name>(2R)-2-phosphoglycerate</name>
        <dbReference type="ChEBI" id="CHEBI:58289"/>
    </ligand>
</feature>
<reference key="1">
    <citation type="submission" date="2003-03" db="EMBL/GenBank/DDBJ databases">
        <title>The complete genome sequence of Neisseria gonorrhoeae.</title>
        <authorList>
            <person name="Lewis L.A."/>
            <person name="Gillaspy A.F."/>
            <person name="McLaughlin R.E."/>
            <person name="Gipson M."/>
            <person name="Ducey T.F."/>
            <person name="Ownbey T."/>
            <person name="Hartman K."/>
            <person name="Nydick C."/>
            <person name="Carson M.B."/>
            <person name="Vaughn J."/>
            <person name="Thomson C."/>
            <person name="Song L."/>
            <person name="Lin S."/>
            <person name="Yuan X."/>
            <person name="Najar F."/>
            <person name="Zhan M."/>
            <person name="Ren Q."/>
            <person name="Zhu H."/>
            <person name="Qi S."/>
            <person name="Kenton S.M."/>
            <person name="Lai H."/>
            <person name="White J.D."/>
            <person name="Clifton S."/>
            <person name="Roe B.A."/>
            <person name="Dyer D.W."/>
        </authorList>
    </citation>
    <scope>NUCLEOTIDE SEQUENCE [LARGE SCALE GENOMIC DNA]</scope>
    <source>
        <strain>ATCC 700825 / FA 1090</strain>
    </source>
</reference>
<dbReference type="EC" id="4.2.1.11" evidence="1"/>
<dbReference type="EMBL" id="AE004969">
    <property type="protein sequence ID" value="AAW89345.1"/>
    <property type="molecule type" value="Genomic_DNA"/>
</dbReference>
<dbReference type="RefSeq" id="WP_003691316.1">
    <property type="nucleotide sequence ID" value="NC_002946.2"/>
</dbReference>
<dbReference type="RefSeq" id="YP_207757.1">
    <property type="nucleotide sequence ID" value="NC_002946.2"/>
</dbReference>
<dbReference type="SMR" id="Q5F8Z2"/>
<dbReference type="STRING" id="242231.NGO_0617"/>
<dbReference type="GeneID" id="66752956"/>
<dbReference type="KEGG" id="ngo:NGO_0617"/>
<dbReference type="PATRIC" id="fig|242231.10.peg.731"/>
<dbReference type="HOGENOM" id="CLU_031223_2_1_4"/>
<dbReference type="UniPathway" id="UPA00109">
    <property type="reaction ID" value="UER00187"/>
</dbReference>
<dbReference type="Proteomes" id="UP000000535">
    <property type="component" value="Chromosome"/>
</dbReference>
<dbReference type="GO" id="GO:0009986">
    <property type="term" value="C:cell surface"/>
    <property type="evidence" value="ECO:0007669"/>
    <property type="project" value="UniProtKB-SubCell"/>
</dbReference>
<dbReference type="GO" id="GO:0005576">
    <property type="term" value="C:extracellular region"/>
    <property type="evidence" value="ECO:0007669"/>
    <property type="project" value="UniProtKB-SubCell"/>
</dbReference>
<dbReference type="GO" id="GO:0000015">
    <property type="term" value="C:phosphopyruvate hydratase complex"/>
    <property type="evidence" value="ECO:0007669"/>
    <property type="project" value="InterPro"/>
</dbReference>
<dbReference type="GO" id="GO:0000287">
    <property type="term" value="F:magnesium ion binding"/>
    <property type="evidence" value="ECO:0007669"/>
    <property type="project" value="UniProtKB-UniRule"/>
</dbReference>
<dbReference type="GO" id="GO:0004634">
    <property type="term" value="F:phosphopyruvate hydratase activity"/>
    <property type="evidence" value="ECO:0007669"/>
    <property type="project" value="UniProtKB-UniRule"/>
</dbReference>
<dbReference type="GO" id="GO:0006096">
    <property type="term" value="P:glycolytic process"/>
    <property type="evidence" value="ECO:0007669"/>
    <property type="project" value="UniProtKB-UniRule"/>
</dbReference>
<dbReference type="CDD" id="cd03313">
    <property type="entry name" value="enolase"/>
    <property type="match status" value="1"/>
</dbReference>
<dbReference type="FunFam" id="3.20.20.120:FF:000001">
    <property type="entry name" value="Enolase"/>
    <property type="match status" value="1"/>
</dbReference>
<dbReference type="FunFam" id="3.30.390.10:FF:000001">
    <property type="entry name" value="Enolase"/>
    <property type="match status" value="1"/>
</dbReference>
<dbReference type="Gene3D" id="3.20.20.120">
    <property type="entry name" value="Enolase-like C-terminal domain"/>
    <property type="match status" value="1"/>
</dbReference>
<dbReference type="Gene3D" id="3.30.390.10">
    <property type="entry name" value="Enolase-like, N-terminal domain"/>
    <property type="match status" value="1"/>
</dbReference>
<dbReference type="HAMAP" id="MF_00318">
    <property type="entry name" value="Enolase"/>
    <property type="match status" value="1"/>
</dbReference>
<dbReference type="InterPro" id="IPR000941">
    <property type="entry name" value="Enolase"/>
</dbReference>
<dbReference type="InterPro" id="IPR036849">
    <property type="entry name" value="Enolase-like_C_sf"/>
</dbReference>
<dbReference type="InterPro" id="IPR029017">
    <property type="entry name" value="Enolase-like_N"/>
</dbReference>
<dbReference type="InterPro" id="IPR020810">
    <property type="entry name" value="Enolase_C"/>
</dbReference>
<dbReference type="InterPro" id="IPR020809">
    <property type="entry name" value="Enolase_CS"/>
</dbReference>
<dbReference type="InterPro" id="IPR020811">
    <property type="entry name" value="Enolase_N"/>
</dbReference>
<dbReference type="NCBIfam" id="TIGR01060">
    <property type="entry name" value="eno"/>
    <property type="match status" value="1"/>
</dbReference>
<dbReference type="PANTHER" id="PTHR11902">
    <property type="entry name" value="ENOLASE"/>
    <property type="match status" value="1"/>
</dbReference>
<dbReference type="PANTHER" id="PTHR11902:SF1">
    <property type="entry name" value="ENOLASE"/>
    <property type="match status" value="1"/>
</dbReference>
<dbReference type="Pfam" id="PF00113">
    <property type="entry name" value="Enolase_C"/>
    <property type="match status" value="1"/>
</dbReference>
<dbReference type="Pfam" id="PF03952">
    <property type="entry name" value="Enolase_N"/>
    <property type="match status" value="1"/>
</dbReference>
<dbReference type="PIRSF" id="PIRSF001400">
    <property type="entry name" value="Enolase"/>
    <property type="match status" value="1"/>
</dbReference>
<dbReference type="PRINTS" id="PR00148">
    <property type="entry name" value="ENOLASE"/>
</dbReference>
<dbReference type="SFLD" id="SFLDS00001">
    <property type="entry name" value="Enolase"/>
    <property type="match status" value="1"/>
</dbReference>
<dbReference type="SFLD" id="SFLDF00002">
    <property type="entry name" value="enolase"/>
    <property type="match status" value="1"/>
</dbReference>
<dbReference type="SMART" id="SM01192">
    <property type="entry name" value="Enolase_C"/>
    <property type="match status" value="1"/>
</dbReference>
<dbReference type="SMART" id="SM01193">
    <property type="entry name" value="Enolase_N"/>
    <property type="match status" value="1"/>
</dbReference>
<dbReference type="SUPFAM" id="SSF51604">
    <property type="entry name" value="Enolase C-terminal domain-like"/>
    <property type="match status" value="1"/>
</dbReference>
<dbReference type="SUPFAM" id="SSF54826">
    <property type="entry name" value="Enolase N-terminal domain-like"/>
    <property type="match status" value="1"/>
</dbReference>
<dbReference type="PROSITE" id="PS00164">
    <property type="entry name" value="ENOLASE"/>
    <property type="match status" value="1"/>
</dbReference>
<organism>
    <name type="scientific">Neisseria gonorrhoeae (strain ATCC 700825 / FA 1090)</name>
    <dbReference type="NCBI Taxonomy" id="242231"/>
    <lineage>
        <taxon>Bacteria</taxon>
        <taxon>Pseudomonadati</taxon>
        <taxon>Pseudomonadota</taxon>
        <taxon>Betaproteobacteria</taxon>
        <taxon>Neisseriales</taxon>
        <taxon>Neisseriaceae</taxon>
        <taxon>Neisseria</taxon>
    </lineage>
</organism>
<accession>Q5F8Z2</accession>
<protein>
    <recommendedName>
        <fullName evidence="1">Enolase</fullName>
        <ecNumber evidence="1">4.2.1.11</ecNumber>
    </recommendedName>
    <alternativeName>
        <fullName evidence="1">2-phospho-D-glycerate hydro-lyase</fullName>
    </alternativeName>
    <alternativeName>
        <fullName evidence="1">2-phosphoglycerate dehydratase</fullName>
    </alternativeName>
</protein>
<evidence type="ECO:0000255" key="1">
    <source>
        <dbReference type="HAMAP-Rule" id="MF_00318"/>
    </source>
</evidence>
<proteinExistence type="inferred from homology"/>
<sequence length="428" mass="46112">MSAIVDIFAREILDSRGNPTVECDVLLESGVMGRAAVPSGASTGQKEALELRDGDKSRYSGKGVLKAVEHVNNQIAQALIGIDANEQSYIDQIMIELDGTENKGNLGANATLAVSMAVARAAAEDSGLPLYRYLGGAGPMSLPVPMMNVINGGEHANNSLNIQEFMIMPVGAKSFREALRCGAEIFHALKKLCDSKGFPTTVGDEGGFAPNLNSHKEALQLMVEAAEAAGYKAGEDVLFALDCASSEFYKDGKYHLEAEGRSYTNAEFAEYLEGLVNEFPIISIEDGMDENDWEGWKLLTEKLGKKVQLVGDDLFVTNPKILAEGIEKGVANALLVKVNQIGTLSETLKAVDLAKCNRYASVMSHRSGETEDSTIADLAVATNCMQIKTGSLSRSDRMAKYNQLLRIEEELAEAAYYPGKAAFYQLGK</sequence>
<comment type="function">
    <text evidence="1">Catalyzes the reversible conversion of 2-phosphoglycerate (2-PG) into phosphoenolpyruvate (PEP). It is essential for the degradation of carbohydrates via glycolysis.</text>
</comment>
<comment type="catalytic activity">
    <reaction evidence="1">
        <text>(2R)-2-phosphoglycerate = phosphoenolpyruvate + H2O</text>
        <dbReference type="Rhea" id="RHEA:10164"/>
        <dbReference type="ChEBI" id="CHEBI:15377"/>
        <dbReference type="ChEBI" id="CHEBI:58289"/>
        <dbReference type="ChEBI" id="CHEBI:58702"/>
        <dbReference type="EC" id="4.2.1.11"/>
    </reaction>
</comment>
<comment type="cofactor">
    <cofactor evidence="1">
        <name>Mg(2+)</name>
        <dbReference type="ChEBI" id="CHEBI:18420"/>
    </cofactor>
    <text evidence="1">Binds a second Mg(2+) ion via substrate during catalysis.</text>
</comment>
<comment type="pathway">
    <text evidence="1">Carbohydrate degradation; glycolysis; pyruvate from D-glyceraldehyde 3-phosphate: step 4/5.</text>
</comment>
<comment type="subcellular location">
    <subcellularLocation>
        <location evidence="1">Cytoplasm</location>
    </subcellularLocation>
    <subcellularLocation>
        <location evidence="1">Secreted</location>
    </subcellularLocation>
    <subcellularLocation>
        <location evidence="1">Cell surface</location>
    </subcellularLocation>
    <text evidence="1">Fractions of enolase are present in both the cytoplasm and on the cell surface.</text>
</comment>
<comment type="similarity">
    <text evidence="1">Belongs to the enolase family.</text>
</comment>
<gene>
    <name evidence="1" type="primary">eno</name>
    <name type="ordered locus">NGO_0617</name>
</gene>
<name>ENO_NEIG1</name>